<comment type="function">
    <text evidence="1">Catalyzes the reversible formation of acyl-phosphate (acyl-PO(4)) from acyl-[acyl-carrier-protein] (acyl-ACP). This enzyme utilizes acyl-ACP as fatty acyl donor, but not acyl-CoA.</text>
</comment>
<comment type="catalytic activity">
    <reaction evidence="1">
        <text>a fatty acyl-[ACP] + phosphate = an acyl phosphate + holo-[ACP]</text>
        <dbReference type="Rhea" id="RHEA:42292"/>
        <dbReference type="Rhea" id="RHEA-COMP:9685"/>
        <dbReference type="Rhea" id="RHEA-COMP:14125"/>
        <dbReference type="ChEBI" id="CHEBI:43474"/>
        <dbReference type="ChEBI" id="CHEBI:59918"/>
        <dbReference type="ChEBI" id="CHEBI:64479"/>
        <dbReference type="ChEBI" id="CHEBI:138651"/>
        <dbReference type="EC" id="2.3.1.274"/>
    </reaction>
</comment>
<comment type="pathway">
    <text evidence="1">Lipid metabolism; phospholipid metabolism.</text>
</comment>
<comment type="subunit">
    <text evidence="1">Homodimer. Probably interacts with PlsY.</text>
</comment>
<comment type="subcellular location">
    <subcellularLocation>
        <location evidence="1">Cytoplasm</location>
    </subcellularLocation>
    <text evidence="1">Associated with the membrane possibly through PlsY.</text>
</comment>
<comment type="similarity">
    <text evidence="1">Belongs to the PlsX family.</text>
</comment>
<gene>
    <name evidence="1" type="primary">plsX</name>
    <name type="ordered locus">Npun_F0098</name>
</gene>
<protein>
    <recommendedName>
        <fullName evidence="1">Phosphate acyltransferase</fullName>
        <ecNumber evidence="1">2.3.1.274</ecNumber>
    </recommendedName>
    <alternativeName>
        <fullName evidence="1">Acyl-ACP phosphotransacylase</fullName>
    </alternativeName>
    <alternativeName>
        <fullName evidence="1">Acyl-[acyl-carrier-protein]--phosphate acyltransferase</fullName>
    </alternativeName>
    <alternativeName>
        <fullName evidence="1">Phosphate-acyl-ACP acyltransferase</fullName>
    </alternativeName>
</protein>
<feature type="chain" id="PRO_1000089924" description="Phosphate acyltransferase">
    <location>
        <begin position="1"/>
        <end position="340"/>
    </location>
</feature>
<keyword id="KW-0963">Cytoplasm</keyword>
<keyword id="KW-0444">Lipid biosynthesis</keyword>
<keyword id="KW-0443">Lipid metabolism</keyword>
<keyword id="KW-0594">Phospholipid biosynthesis</keyword>
<keyword id="KW-1208">Phospholipid metabolism</keyword>
<keyword id="KW-1185">Reference proteome</keyword>
<keyword id="KW-0808">Transferase</keyword>
<proteinExistence type="inferred from homology"/>
<accession>B2J3G9</accession>
<evidence type="ECO:0000255" key="1">
    <source>
        <dbReference type="HAMAP-Rule" id="MF_00019"/>
    </source>
</evidence>
<organism>
    <name type="scientific">Nostoc punctiforme (strain ATCC 29133 / PCC 73102)</name>
    <dbReference type="NCBI Taxonomy" id="63737"/>
    <lineage>
        <taxon>Bacteria</taxon>
        <taxon>Bacillati</taxon>
        <taxon>Cyanobacteriota</taxon>
        <taxon>Cyanophyceae</taxon>
        <taxon>Nostocales</taxon>
        <taxon>Nostocaceae</taxon>
        <taxon>Nostoc</taxon>
    </lineage>
</organism>
<name>PLSX_NOSP7</name>
<reference key="1">
    <citation type="journal article" date="2013" name="Plant Physiol.">
        <title>A Nostoc punctiforme Sugar Transporter Necessary to Establish a Cyanobacterium-Plant Symbiosis.</title>
        <authorList>
            <person name="Ekman M."/>
            <person name="Picossi S."/>
            <person name="Campbell E.L."/>
            <person name="Meeks J.C."/>
            <person name="Flores E."/>
        </authorList>
    </citation>
    <scope>NUCLEOTIDE SEQUENCE [LARGE SCALE GENOMIC DNA]</scope>
    <source>
        <strain>ATCC 29133 / PCC 73102</strain>
    </source>
</reference>
<sequence length="340" mass="36193">MGSTRVRIAIDAMGGDHAPGEIVAGALRAKEELGVEILLVGDPQQIEAALPPKTNLAQVEIVPAEEAIAMDEEPLNAVRRKRKASINVAMDLVKQQKADAVFSAGHSGAAMASALLRLGRLPGIDRPAIGTVFPTIVAGKPVLVLDVGANVDCRPKFLEQFAVMGSAYSQYVLGTTEPKVGLLNIGEEDSKGNDAAVRAHQLLRENSQINFIGNAEGRDVLSGHFDVIVCDGFVGNVLLKFAEAVGEVILQILREELPQGLHGQIGSAFLKPNLKRVKQRMDHAEHGGALLLGVAGVCFIGHGSSQAPSIFNAIRMAKEAVDNQVLQRIQSQYILERESG</sequence>
<dbReference type="EC" id="2.3.1.274" evidence="1"/>
<dbReference type="EMBL" id="CP001037">
    <property type="protein sequence ID" value="ACC78899.1"/>
    <property type="molecule type" value="Genomic_DNA"/>
</dbReference>
<dbReference type="RefSeq" id="WP_012406928.1">
    <property type="nucleotide sequence ID" value="NC_010628.1"/>
</dbReference>
<dbReference type="SMR" id="B2J3G9"/>
<dbReference type="STRING" id="63737.Npun_F0098"/>
<dbReference type="EnsemblBacteria" id="ACC78899">
    <property type="protein sequence ID" value="ACC78899"/>
    <property type="gene ID" value="Npun_F0098"/>
</dbReference>
<dbReference type="KEGG" id="npu:Npun_F0098"/>
<dbReference type="eggNOG" id="COG0416">
    <property type="taxonomic scope" value="Bacteria"/>
</dbReference>
<dbReference type="HOGENOM" id="CLU_039379_1_1_3"/>
<dbReference type="OrthoDB" id="9806408at2"/>
<dbReference type="PhylomeDB" id="B2J3G9"/>
<dbReference type="UniPathway" id="UPA00085"/>
<dbReference type="Proteomes" id="UP000001191">
    <property type="component" value="Chromosome"/>
</dbReference>
<dbReference type="GO" id="GO:0005737">
    <property type="term" value="C:cytoplasm"/>
    <property type="evidence" value="ECO:0007669"/>
    <property type="project" value="UniProtKB-SubCell"/>
</dbReference>
<dbReference type="GO" id="GO:0043811">
    <property type="term" value="F:phosphate:acyl-[acyl carrier protein] acyltransferase activity"/>
    <property type="evidence" value="ECO:0007669"/>
    <property type="project" value="UniProtKB-UniRule"/>
</dbReference>
<dbReference type="GO" id="GO:0006633">
    <property type="term" value="P:fatty acid biosynthetic process"/>
    <property type="evidence" value="ECO:0007669"/>
    <property type="project" value="UniProtKB-UniRule"/>
</dbReference>
<dbReference type="GO" id="GO:0008654">
    <property type="term" value="P:phospholipid biosynthetic process"/>
    <property type="evidence" value="ECO:0007669"/>
    <property type="project" value="UniProtKB-KW"/>
</dbReference>
<dbReference type="Gene3D" id="3.40.718.10">
    <property type="entry name" value="Isopropylmalate Dehydrogenase"/>
    <property type="match status" value="1"/>
</dbReference>
<dbReference type="HAMAP" id="MF_00019">
    <property type="entry name" value="PlsX"/>
    <property type="match status" value="1"/>
</dbReference>
<dbReference type="InterPro" id="IPR003664">
    <property type="entry name" value="FA_synthesis"/>
</dbReference>
<dbReference type="InterPro" id="IPR012281">
    <property type="entry name" value="Phospholipid_synth_PlsX-like"/>
</dbReference>
<dbReference type="NCBIfam" id="TIGR00182">
    <property type="entry name" value="plsX"/>
    <property type="match status" value="1"/>
</dbReference>
<dbReference type="PANTHER" id="PTHR30100">
    <property type="entry name" value="FATTY ACID/PHOSPHOLIPID SYNTHESIS PROTEIN PLSX"/>
    <property type="match status" value="1"/>
</dbReference>
<dbReference type="PANTHER" id="PTHR30100:SF1">
    <property type="entry name" value="PHOSPHATE ACYLTRANSFERASE"/>
    <property type="match status" value="1"/>
</dbReference>
<dbReference type="Pfam" id="PF02504">
    <property type="entry name" value="FA_synthesis"/>
    <property type="match status" value="1"/>
</dbReference>
<dbReference type="PIRSF" id="PIRSF002465">
    <property type="entry name" value="Phsphlp_syn_PlsX"/>
    <property type="match status" value="1"/>
</dbReference>
<dbReference type="SUPFAM" id="SSF53659">
    <property type="entry name" value="Isocitrate/Isopropylmalate dehydrogenase-like"/>
    <property type="match status" value="1"/>
</dbReference>